<proteinExistence type="inferred from homology"/>
<evidence type="ECO:0000255" key="1">
    <source>
        <dbReference type="HAMAP-Rule" id="MF_00473"/>
    </source>
</evidence>
<evidence type="ECO:0000305" key="2"/>
<reference key="1">
    <citation type="journal article" date="2000" name="Nucleic Acids Res.">
        <title>Complete genome sequence of the alkaliphilic bacterium Bacillus halodurans and genomic sequence comparison with Bacillus subtilis.</title>
        <authorList>
            <person name="Takami H."/>
            <person name="Nakasone K."/>
            <person name="Takaki Y."/>
            <person name="Maeno G."/>
            <person name="Sasaki R."/>
            <person name="Masui N."/>
            <person name="Fuji F."/>
            <person name="Hirama C."/>
            <person name="Nakamura Y."/>
            <person name="Ogasawara N."/>
            <person name="Kuhara S."/>
            <person name="Horikoshi K."/>
        </authorList>
    </citation>
    <scope>NUCLEOTIDE SEQUENCE [LARGE SCALE GENOMIC DNA]</scope>
    <source>
        <strain>ATCC BAA-125 / DSM 18197 / FERM 7344 / JCM 9153 / C-125</strain>
    </source>
</reference>
<sequence>MSGKVCFDYSKALDFIQEHELDNLQDQVHAAHRALHDGTGAGNDFLGWIDLPVNYDREEFSRIQKAAEKIRNDSDVLLVIGIGGSYLGAKATLEALNHSFYNIVDKSERKGPQIFFVGHHISSTYVQELFDVLEGKDVSINVISKSGTTTEPAIAFRIFRDYLEKKYGKEESRKRIYATTDRERGALKTLANEEGYESFIIPDDVGGRFSVLTAVGLLPIAASGLDIEAMMKGAADARDAFRNSDLKENPAYQYAVVRNALYNKGKTIELMVNYEPALQYFSEWWKQLYGESEGKDGKGIFPASVNFSTDLHSMGQYVQDGRRDLFETIIQVEKPKKNMTIEKADQDLDGLNYLAGETMDFVNKKAFEGTLLAHVDGGVPNLVVSVPELDEYYMGYLMYFFEKACGLSGYLLGVNPFDQPGVEAYKKNMFALLGKPGFEEQKAALEKRLK</sequence>
<dbReference type="EC" id="5.3.1.9" evidence="1"/>
<dbReference type="EMBL" id="BA000004">
    <property type="protein sequence ID" value="BAB07062.1"/>
    <property type="molecule type" value="Genomic_DNA"/>
</dbReference>
<dbReference type="PIR" id="G84067">
    <property type="entry name" value="G84067"/>
</dbReference>
<dbReference type="RefSeq" id="WP_010899484.1">
    <property type="nucleotide sequence ID" value="NC_002570.2"/>
</dbReference>
<dbReference type="SMR" id="Q9K7L8"/>
<dbReference type="STRING" id="272558.gene:10729256"/>
<dbReference type="GeneID" id="87598862"/>
<dbReference type="KEGG" id="bha:BH3343"/>
<dbReference type="eggNOG" id="COG0166">
    <property type="taxonomic scope" value="Bacteria"/>
</dbReference>
<dbReference type="HOGENOM" id="CLU_037303_0_1_9"/>
<dbReference type="OrthoDB" id="140919at2"/>
<dbReference type="UniPathway" id="UPA00109">
    <property type="reaction ID" value="UER00181"/>
</dbReference>
<dbReference type="UniPathway" id="UPA00138"/>
<dbReference type="Proteomes" id="UP000001258">
    <property type="component" value="Chromosome"/>
</dbReference>
<dbReference type="GO" id="GO:0005829">
    <property type="term" value="C:cytosol"/>
    <property type="evidence" value="ECO:0007669"/>
    <property type="project" value="TreeGrafter"/>
</dbReference>
<dbReference type="GO" id="GO:0097367">
    <property type="term" value="F:carbohydrate derivative binding"/>
    <property type="evidence" value="ECO:0007669"/>
    <property type="project" value="InterPro"/>
</dbReference>
<dbReference type="GO" id="GO:0004347">
    <property type="term" value="F:glucose-6-phosphate isomerase activity"/>
    <property type="evidence" value="ECO:0007669"/>
    <property type="project" value="UniProtKB-UniRule"/>
</dbReference>
<dbReference type="GO" id="GO:0048029">
    <property type="term" value="F:monosaccharide binding"/>
    <property type="evidence" value="ECO:0007669"/>
    <property type="project" value="TreeGrafter"/>
</dbReference>
<dbReference type="GO" id="GO:0006094">
    <property type="term" value="P:gluconeogenesis"/>
    <property type="evidence" value="ECO:0007669"/>
    <property type="project" value="UniProtKB-UniRule"/>
</dbReference>
<dbReference type="GO" id="GO:0051156">
    <property type="term" value="P:glucose 6-phosphate metabolic process"/>
    <property type="evidence" value="ECO:0007669"/>
    <property type="project" value="TreeGrafter"/>
</dbReference>
<dbReference type="GO" id="GO:0006096">
    <property type="term" value="P:glycolytic process"/>
    <property type="evidence" value="ECO:0007669"/>
    <property type="project" value="UniProtKB-UniRule"/>
</dbReference>
<dbReference type="CDD" id="cd05015">
    <property type="entry name" value="SIS_PGI_1"/>
    <property type="match status" value="1"/>
</dbReference>
<dbReference type="CDD" id="cd05016">
    <property type="entry name" value="SIS_PGI_2"/>
    <property type="match status" value="1"/>
</dbReference>
<dbReference type="FunFam" id="3.40.50.10490:FF:000015">
    <property type="entry name" value="Glucose-6-phosphate isomerase"/>
    <property type="match status" value="1"/>
</dbReference>
<dbReference type="FunFam" id="3.40.50.10490:FF:000016">
    <property type="entry name" value="Glucose-6-phosphate isomerase"/>
    <property type="match status" value="1"/>
</dbReference>
<dbReference type="Gene3D" id="3.40.50.10490">
    <property type="entry name" value="Glucose-6-phosphate isomerase like protein, domain 1"/>
    <property type="match status" value="3"/>
</dbReference>
<dbReference type="HAMAP" id="MF_00473">
    <property type="entry name" value="G6P_isomerase"/>
    <property type="match status" value="1"/>
</dbReference>
<dbReference type="InterPro" id="IPR001672">
    <property type="entry name" value="G6P_Isomerase"/>
</dbReference>
<dbReference type="InterPro" id="IPR018189">
    <property type="entry name" value="Phosphoglucose_isomerase_CS"/>
</dbReference>
<dbReference type="InterPro" id="IPR046348">
    <property type="entry name" value="SIS_dom_sf"/>
</dbReference>
<dbReference type="InterPro" id="IPR035476">
    <property type="entry name" value="SIS_PGI_1"/>
</dbReference>
<dbReference type="InterPro" id="IPR035482">
    <property type="entry name" value="SIS_PGI_2"/>
</dbReference>
<dbReference type="NCBIfam" id="NF010697">
    <property type="entry name" value="PRK14097.1"/>
    <property type="match status" value="1"/>
</dbReference>
<dbReference type="PANTHER" id="PTHR11469">
    <property type="entry name" value="GLUCOSE-6-PHOSPHATE ISOMERASE"/>
    <property type="match status" value="1"/>
</dbReference>
<dbReference type="PANTHER" id="PTHR11469:SF1">
    <property type="entry name" value="GLUCOSE-6-PHOSPHATE ISOMERASE"/>
    <property type="match status" value="1"/>
</dbReference>
<dbReference type="Pfam" id="PF00342">
    <property type="entry name" value="PGI"/>
    <property type="match status" value="1"/>
</dbReference>
<dbReference type="PRINTS" id="PR00662">
    <property type="entry name" value="G6PISOMERASE"/>
</dbReference>
<dbReference type="SUPFAM" id="SSF53697">
    <property type="entry name" value="SIS domain"/>
    <property type="match status" value="1"/>
</dbReference>
<dbReference type="PROSITE" id="PS00765">
    <property type="entry name" value="P_GLUCOSE_ISOMERASE_1"/>
    <property type="match status" value="1"/>
</dbReference>
<dbReference type="PROSITE" id="PS00174">
    <property type="entry name" value="P_GLUCOSE_ISOMERASE_2"/>
    <property type="match status" value="1"/>
</dbReference>
<dbReference type="PROSITE" id="PS51463">
    <property type="entry name" value="P_GLUCOSE_ISOMERASE_3"/>
    <property type="match status" value="1"/>
</dbReference>
<feature type="chain" id="PRO_0000180589" description="Glucose-6-phosphate isomerase">
    <location>
        <begin position="1"/>
        <end position="450"/>
    </location>
</feature>
<feature type="active site" description="Proton donor" evidence="1">
    <location>
        <position position="291"/>
    </location>
</feature>
<feature type="active site" evidence="1">
    <location>
        <position position="312"/>
    </location>
</feature>
<feature type="active site" evidence="1">
    <location>
        <position position="426"/>
    </location>
</feature>
<feature type="modified residue" description="Phosphothreonine" evidence="1">
    <location>
        <position position="39"/>
    </location>
</feature>
<comment type="function">
    <text evidence="1">Catalyzes the reversible isomerization of glucose-6-phosphate to fructose-6-phosphate.</text>
</comment>
<comment type="catalytic activity">
    <reaction evidence="1">
        <text>alpha-D-glucose 6-phosphate = beta-D-fructose 6-phosphate</text>
        <dbReference type="Rhea" id="RHEA:11816"/>
        <dbReference type="ChEBI" id="CHEBI:57634"/>
        <dbReference type="ChEBI" id="CHEBI:58225"/>
        <dbReference type="EC" id="5.3.1.9"/>
    </reaction>
</comment>
<comment type="pathway">
    <text evidence="1">Carbohydrate biosynthesis; gluconeogenesis.</text>
</comment>
<comment type="pathway">
    <text evidence="1">Carbohydrate degradation; glycolysis; D-glyceraldehyde 3-phosphate and glycerone phosphate from D-glucose: step 2/4.</text>
</comment>
<comment type="subcellular location">
    <subcellularLocation>
        <location evidence="1">Cytoplasm</location>
    </subcellularLocation>
</comment>
<comment type="similarity">
    <text evidence="1 2">Belongs to the GPI family.</text>
</comment>
<accession>Q9K7L8</accession>
<protein>
    <recommendedName>
        <fullName evidence="1">Glucose-6-phosphate isomerase</fullName>
        <shortName evidence="1">GPI</shortName>
        <ecNumber evidence="1">5.3.1.9</ecNumber>
    </recommendedName>
    <alternativeName>
        <fullName evidence="1">Phosphoglucose isomerase</fullName>
        <shortName evidence="1">PGI</shortName>
    </alternativeName>
    <alternativeName>
        <fullName evidence="1">Phosphohexose isomerase</fullName>
        <shortName evidence="1">PHI</shortName>
    </alternativeName>
</protein>
<keyword id="KW-0963">Cytoplasm</keyword>
<keyword id="KW-0312">Gluconeogenesis</keyword>
<keyword id="KW-0324">Glycolysis</keyword>
<keyword id="KW-0413">Isomerase</keyword>
<keyword id="KW-0597">Phosphoprotein</keyword>
<keyword id="KW-1185">Reference proteome</keyword>
<name>G6PI_HALH5</name>
<gene>
    <name evidence="1" type="primary">pgi</name>
    <name type="ordered locus">BH3343</name>
</gene>
<organism>
    <name type="scientific">Halalkalibacterium halodurans (strain ATCC BAA-125 / DSM 18197 / FERM 7344 / JCM 9153 / C-125)</name>
    <name type="common">Bacillus halodurans</name>
    <dbReference type="NCBI Taxonomy" id="272558"/>
    <lineage>
        <taxon>Bacteria</taxon>
        <taxon>Bacillati</taxon>
        <taxon>Bacillota</taxon>
        <taxon>Bacilli</taxon>
        <taxon>Bacillales</taxon>
        <taxon>Bacillaceae</taxon>
        <taxon>Halalkalibacterium (ex Joshi et al. 2022)</taxon>
    </lineage>
</organism>